<accession>B7MG18</accession>
<protein>
    <recommendedName>
        <fullName evidence="1">Nucleoside triphosphatase NudI</fullName>
        <ecNumber evidence="1">3.6.1.9</ecNumber>
    </recommendedName>
    <alternativeName>
        <fullName evidence="1">Nucleotide diphosphatase NudI</fullName>
    </alternativeName>
    <alternativeName>
        <fullName evidence="1">Pyrimidine deoxynucleoside triphosphate diphosphatase</fullName>
    </alternativeName>
    <alternativeName>
        <fullName evidence="1">dCTP diphosphatase</fullName>
        <ecNumber evidence="1">3.6.1.12</ecNumber>
    </alternativeName>
    <alternativeName>
        <fullName evidence="1">dTTP diphosphatase</fullName>
        <ecNumber evidence="1">3.6.1.-</ecNumber>
    </alternativeName>
    <alternativeName>
        <fullName evidence="1">dUTP diphosphatase</fullName>
        <ecNumber evidence="1">3.6.1.23</ecNumber>
    </alternativeName>
</protein>
<evidence type="ECO:0000255" key="1">
    <source>
        <dbReference type="HAMAP-Rule" id="MF_01846"/>
    </source>
</evidence>
<comment type="function">
    <text evidence="1">Catalyzes the hydrolysis of nucleoside triphosphates, with a preference for pyrimidine deoxynucleoside triphosphates (dUTP, dTTP and dCTP).</text>
</comment>
<comment type="catalytic activity">
    <reaction evidence="1">
        <text>a ribonucleoside 5'-triphosphate + H2O = a ribonucleoside 5'-phosphate + diphosphate + H(+)</text>
        <dbReference type="Rhea" id="RHEA:23996"/>
        <dbReference type="ChEBI" id="CHEBI:15377"/>
        <dbReference type="ChEBI" id="CHEBI:15378"/>
        <dbReference type="ChEBI" id="CHEBI:33019"/>
        <dbReference type="ChEBI" id="CHEBI:58043"/>
        <dbReference type="ChEBI" id="CHEBI:61557"/>
        <dbReference type="EC" id="3.6.1.9"/>
    </reaction>
</comment>
<comment type="catalytic activity">
    <reaction evidence="1">
        <text>a 2'-deoxyribonucleoside 5'-triphosphate + H2O = a 2'-deoxyribonucleoside 5'-phosphate + diphosphate + H(+)</text>
        <dbReference type="Rhea" id="RHEA:44644"/>
        <dbReference type="ChEBI" id="CHEBI:15377"/>
        <dbReference type="ChEBI" id="CHEBI:15378"/>
        <dbReference type="ChEBI" id="CHEBI:33019"/>
        <dbReference type="ChEBI" id="CHEBI:61560"/>
        <dbReference type="ChEBI" id="CHEBI:65317"/>
        <dbReference type="EC" id="3.6.1.9"/>
    </reaction>
</comment>
<comment type="catalytic activity">
    <reaction evidence="1">
        <text>dUTP + H2O = dUMP + diphosphate + H(+)</text>
        <dbReference type="Rhea" id="RHEA:10248"/>
        <dbReference type="ChEBI" id="CHEBI:15377"/>
        <dbReference type="ChEBI" id="CHEBI:15378"/>
        <dbReference type="ChEBI" id="CHEBI:33019"/>
        <dbReference type="ChEBI" id="CHEBI:61555"/>
        <dbReference type="ChEBI" id="CHEBI:246422"/>
        <dbReference type="EC" id="3.6.1.9"/>
    </reaction>
</comment>
<comment type="catalytic activity">
    <reaction evidence="1">
        <text>dUTP + H2O = dUMP + diphosphate + H(+)</text>
        <dbReference type="Rhea" id="RHEA:10248"/>
        <dbReference type="ChEBI" id="CHEBI:15377"/>
        <dbReference type="ChEBI" id="CHEBI:15378"/>
        <dbReference type="ChEBI" id="CHEBI:33019"/>
        <dbReference type="ChEBI" id="CHEBI:61555"/>
        <dbReference type="ChEBI" id="CHEBI:246422"/>
        <dbReference type="EC" id="3.6.1.23"/>
    </reaction>
</comment>
<comment type="catalytic activity">
    <reaction evidence="1">
        <text>dTTP + H2O = dTMP + diphosphate + H(+)</text>
        <dbReference type="Rhea" id="RHEA:28534"/>
        <dbReference type="ChEBI" id="CHEBI:15377"/>
        <dbReference type="ChEBI" id="CHEBI:15378"/>
        <dbReference type="ChEBI" id="CHEBI:33019"/>
        <dbReference type="ChEBI" id="CHEBI:37568"/>
        <dbReference type="ChEBI" id="CHEBI:63528"/>
        <dbReference type="EC" id="3.6.1.9"/>
    </reaction>
</comment>
<comment type="catalytic activity">
    <reaction evidence="1">
        <text>dCTP + H2O = dCMP + diphosphate + H(+)</text>
        <dbReference type="Rhea" id="RHEA:22636"/>
        <dbReference type="ChEBI" id="CHEBI:15377"/>
        <dbReference type="ChEBI" id="CHEBI:15378"/>
        <dbReference type="ChEBI" id="CHEBI:33019"/>
        <dbReference type="ChEBI" id="CHEBI:57566"/>
        <dbReference type="ChEBI" id="CHEBI:61481"/>
        <dbReference type="EC" id="3.6.1.9"/>
    </reaction>
</comment>
<comment type="catalytic activity">
    <reaction evidence="1">
        <text>dCTP + H2O = dCMP + diphosphate + H(+)</text>
        <dbReference type="Rhea" id="RHEA:22636"/>
        <dbReference type="ChEBI" id="CHEBI:15377"/>
        <dbReference type="ChEBI" id="CHEBI:15378"/>
        <dbReference type="ChEBI" id="CHEBI:33019"/>
        <dbReference type="ChEBI" id="CHEBI:57566"/>
        <dbReference type="ChEBI" id="CHEBI:61481"/>
        <dbReference type="EC" id="3.6.1.12"/>
    </reaction>
</comment>
<comment type="cofactor">
    <cofactor evidence="1">
        <name>Mg(2+)</name>
        <dbReference type="ChEBI" id="CHEBI:18420"/>
    </cofactor>
</comment>
<comment type="subunit">
    <text evidence="1">Monomer.</text>
</comment>
<comment type="similarity">
    <text evidence="1">Belongs to the Nudix hydrolase family. NudI subfamily.</text>
</comment>
<keyword id="KW-0378">Hydrolase</keyword>
<keyword id="KW-0460">Magnesium</keyword>
<keyword id="KW-1185">Reference proteome</keyword>
<proteinExistence type="inferred from homology"/>
<name>NUDI_ECO45</name>
<sequence>MRQRTIVCPLIQNDGAYLLCKMADDRGVFPGQWALSGGGVEPGERIEEALRREIREELGEQLLLTEITPWTFSDDIRTKTYADGRKEEIYMIYLIFDCVSANREVKINEEFQDYAWVKPEDLVHYDLNVATRKTLRLKGLL</sequence>
<gene>
    <name evidence="1" type="primary">nudI</name>
    <name type="ordered locus">ECS88_2400</name>
</gene>
<feature type="chain" id="PRO_1000188477" description="Nucleoside triphosphatase NudI">
    <location>
        <begin position="1"/>
        <end position="141"/>
    </location>
</feature>
<feature type="domain" description="Nudix hydrolase" evidence="1">
    <location>
        <begin position="1"/>
        <end position="141"/>
    </location>
</feature>
<feature type="short sequence motif" description="Nudix box">
    <location>
        <begin position="38"/>
        <end position="59"/>
    </location>
</feature>
<organism>
    <name type="scientific">Escherichia coli O45:K1 (strain S88 / ExPEC)</name>
    <dbReference type="NCBI Taxonomy" id="585035"/>
    <lineage>
        <taxon>Bacteria</taxon>
        <taxon>Pseudomonadati</taxon>
        <taxon>Pseudomonadota</taxon>
        <taxon>Gammaproteobacteria</taxon>
        <taxon>Enterobacterales</taxon>
        <taxon>Enterobacteriaceae</taxon>
        <taxon>Escherichia</taxon>
    </lineage>
</organism>
<reference key="1">
    <citation type="journal article" date="2009" name="PLoS Genet.">
        <title>Organised genome dynamics in the Escherichia coli species results in highly diverse adaptive paths.</title>
        <authorList>
            <person name="Touchon M."/>
            <person name="Hoede C."/>
            <person name="Tenaillon O."/>
            <person name="Barbe V."/>
            <person name="Baeriswyl S."/>
            <person name="Bidet P."/>
            <person name="Bingen E."/>
            <person name="Bonacorsi S."/>
            <person name="Bouchier C."/>
            <person name="Bouvet O."/>
            <person name="Calteau A."/>
            <person name="Chiapello H."/>
            <person name="Clermont O."/>
            <person name="Cruveiller S."/>
            <person name="Danchin A."/>
            <person name="Diard M."/>
            <person name="Dossat C."/>
            <person name="Karoui M.E."/>
            <person name="Frapy E."/>
            <person name="Garry L."/>
            <person name="Ghigo J.M."/>
            <person name="Gilles A.M."/>
            <person name="Johnson J."/>
            <person name="Le Bouguenec C."/>
            <person name="Lescat M."/>
            <person name="Mangenot S."/>
            <person name="Martinez-Jehanne V."/>
            <person name="Matic I."/>
            <person name="Nassif X."/>
            <person name="Oztas S."/>
            <person name="Petit M.A."/>
            <person name="Pichon C."/>
            <person name="Rouy Z."/>
            <person name="Ruf C.S."/>
            <person name="Schneider D."/>
            <person name="Tourret J."/>
            <person name="Vacherie B."/>
            <person name="Vallenet D."/>
            <person name="Medigue C."/>
            <person name="Rocha E.P.C."/>
            <person name="Denamur E."/>
        </authorList>
    </citation>
    <scope>NUCLEOTIDE SEQUENCE [LARGE SCALE GENOMIC DNA]</scope>
    <source>
        <strain>S88 / ExPEC</strain>
    </source>
</reference>
<dbReference type="EC" id="3.6.1.9" evidence="1"/>
<dbReference type="EC" id="3.6.1.12" evidence="1"/>
<dbReference type="EC" id="3.6.1.-" evidence="1"/>
<dbReference type="EC" id="3.6.1.23" evidence="1"/>
<dbReference type="EMBL" id="CU928161">
    <property type="protein sequence ID" value="CAR03680.1"/>
    <property type="molecule type" value="Genomic_DNA"/>
</dbReference>
<dbReference type="RefSeq" id="WP_001249884.1">
    <property type="nucleotide sequence ID" value="NC_011742.1"/>
</dbReference>
<dbReference type="SMR" id="B7MG18"/>
<dbReference type="GeneID" id="75172382"/>
<dbReference type="KEGG" id="ecz:ECS88_2400"/>
<dbReference type="HOGENOM" id="CLU_037162_31_0_6"/>
<dbReference type="Proteomes" id="UP000000747">
    <property type="component" value="Chromosome"/>
</dbReference>
<dbReference type="GO" id="GO:0047840">
    <property type="term" value="F:dCTP diphosphatase activity"/>
    <property type="evidence" value="ECO:0007669"/>
    <property type="project" value="UniProtKB-EC"/>
</dbReference>
<dbReference type="GO" id="GO:0036218">
    <property type="term" value="F:dTTP diphosphatase activity"/>
    <property type="evidence" value="ECO:0007669"/>
    <property type="project" value="RHEA"/>
</dbReference>
<dbReference type="GO" id="GO:0004170">
    <property type="term" value="F:dUTP diphosphatase activity"/>
    <property type="evidence" value="ECO:0007669"/>
    <property type="project" value="UniProtKB-EC"/>
</dbReference>
<dbReference type="GO" id="GO:0000287">
    <property type="term" value="F:magnesium ion binding"/>
    <property type="evidence" value="ECO:0007669"/>
    <property type="project" value="UniProtKB-UniRule"/>
</dbReference>
<dbReference type="FunFam" id="3.90.79.10:FF:000039">
    <property type="entry name" value="Nucleoside triphosphatase NudI"/>
    <property type="match status" value="1"/>
</dbReference>
<dbReference type="Gene3D" id="3.90.79.10">
    <property type="entry name" value="Nucleoside Triphosphate Pyrophosphohydrolase"/>
    <property type="match status" value="1"/>
</dbReference>
<dbReference type="HAMAP" id="MF_01846">
    <property type="entry name" value="Nudix_NudI"/>
    <property type="match status" value="1"/>
</dbReference>
<dbReference type="InterPro" id="IPR023781">
    <property type="entry name" value="Nucleoside_triphosphatase_NudI"/>
</dbReference>
<dbReference type="InterPro" id="IPR020476">
    <property type="entry name" value="Nudix_hydrolase"/>
</dbReference>
<dbReference type="InterPro" id="IPR015797">
    <property type="entry name" value="NUDIX_hydrolase-like_dom_sf"/>
</dbReference>
<dbReference type="InterPro" id="IPR020084">
    <property type="entry name" value="NUDIX_hydrolase_CS"/>
</dbReference>
<dbReference type="InterPro" id="IPR000086">
    <property type="entry name" value="NUDIX_hydrolase_dom"/>
</dbReference>
<dbReference type="NCBIfam" id="NF012016">
    <property type="entry name" value="PRK15472.1"/>
    <property type="match status" value="1"/>
</dbReference>
<dbReference type="PANTHER" id="PTHR43046">
    <property type="entry name" value="GDP-MANNOSE MANNOSYL HYDROLASE"/>
    <property type="match status" value="1"/>
</dbReference>
<dbReference type="PANTHER" id="PTHR43046:SF14">
    <property type="entry name" value="MUTT_NUDIX FAMILY PROTEIN"/>
    <property type="match status" value="1"/>
</dbReference>
<dbReference type="Pfam" id="PF00293">
    <property type="entry name" value="NUDIX"/>
    <property type="match status" value="1"/>
</dbReference>
<dbReference type="PRINTS" id="PR00502">
    <property type="entry name" value="NUDIXFAMILY"/>
</dbReference>
<dbReference type="SUPFAM" id="SSF55811">
    <property type="entry name" value="Nudix"/>
    <property type="match status" value="1"/>
</dbReference>
<dbReference type="PROSITE" id="PS51462">
    <property type="entry name" value="NUDIX"/>
    <property type="match status" value="1"/>
</dbReference>
<dbReference type="PROSITE" id="PS00893">
    <property type="entry name" value="NUDIX_BOX"/>
    <property type="match status" value="1"/>
</dbReference>